<evidence type="ECO:0000255" key="1">
    <source>
        <dbReference type="HAMAP-Rule" id="MF_01069"/>
    </source>
</evidence>
<accession>Q6N5U4</accession>
<comment type="function">
    <text evidence="1">Involved in the biosynthesis of osmoregulated periplasmic glucans (OPGs).</text>
</comment>
<comment type="pathway">
    <text evidence="1">Glycan metabolism; osmoregulated periplasmic glucan (OPG) biosynthesis.</text>
</comment>
<comment type="subcellular location">
    <subcellularLocation>
        <location evidence="1">Periplasm</location>
    </subcellularLocation>
</comment>
<comment type="similarity">
    <text evidence="1">Belongs to the OpgD/OpgG family.</text>
</comment>
<proteinExistence type="inferred from homology"/>
<keyword id="KW-0574">Periplasm</keyword>
<keyword id="KW-0732">Signal</keyword>
<reference key="1">
    <citation type="journal article" date="2004" name="Nat. Biotechnol.">
        <title>Complete genome sequence of the metabolically versatile photosynthetic bacterium Rhodopseudomonas palustris.</title>
        <authorList>
            <person name="Larimer F.W."/>
            <person name="Chain P."/>
            <person name="Hauser L."/>
            <person name="Lamerdin J.E."/>
            <person name="Malfatti S."/>
            <person name="Do L."/>
            <person name="Land M.L."/>
            <person name="Pelletier D.A."/>
            <person name="Beatty J.T."/>
            <person name="Lang A.S."/>
            <person name="Tabita F.R."/>
            <person name="Gibson J.L."/>
            <person name="Hanson T.E."/>
            <person name="Bobst C."/>
            <person name="Torres y Torres J.L."/>
            <person name="Peres C."/>
            <person name="Harrison F.H."/>
            <person name="Gibson J."/>
            <person name="Harwood C.S."/>
        </authorList>
    </citation>
    <scope>NUCLEOTIDE SEQUENCE [LARGE SCALE GENOMIC DNA]</scope>
    <source>
        <strain>ATCC BAA-98 / CGA009</strain>
    </source>
</reference>
<organism>
    <name type="scientific">Rhodopseudomonas palustris (strain ATCC BAA-98 / CGA009)</name>
    <dbReference type="NCBI Taxonomy" id="258594"/>
    <lineage>
        <taxon>Bacteria</taxon>
        <taxon>Pseudomonadati</taxon>
        <taxon>Pseudomonadota</taxon>
        <taxon>Alphaproteobacteria</taxon>
        <taxon>Hyphomicrobiales</taxon>
        <taxon>Nitrobacteraceae</taxon>
        <taxon>Rhodopseudomonas</taxon>
    </lineage>
</organism>
<dbReference type="EMBL" id="BX572602">
    <property type="protein sequence ID" value="CAE28317.1"/>
    <property type="molecule type" value="Genomic_DNA"/>
</dbReference>
<dbReference type="RefSeq" id="WP_011158425.1">
    <property type="nucleotide sequence ID" value="NZ_CP116810.1"/>
</dbReference>
<dbReference type="SMR" id="Q6N5U4"/>
<dbReference type="STRING" id="258594.RPA2876"/>
<dbReference type="GeneID" id="66893957"/>
<dbReference type="eggNOG" id="COG3131">
    <property type="taxonomic scope" value="Bacteria"/>
</dbReference>
<dbReference type="HOGENOM" id="CLU_023403_2_0_5"/>
<dbReference type="PhylomeDB" id="Q6N5U4"/>
<dbReference type="UniPathway" id="UPA00637"/>
<dbReference type="GO" id="GO:0030288">
    <property type="term" value="C:outer membrane-bounded periplasmic space"/>
    <property type="evidence" value="ECO:0007669"/>
    <property type="project" value="TreeGrafter"/>
</dbReference>
<dbReference type="GO" id="GO:0030246">
    <property type="term" value="F:carbohydrate binding"/>
    <property type="evidence" value="ECO:0007669"/>
    <property type="project" value="InterPro"/>
</dbReference>
<dbReference type="GO" id="GO:0003824">
    <property type="term" value="F:catalytic activity"/>
    <property type="evidence" value="ECO:0007669"/>
    <property type="project" value="InterPro"/>
</dbReference>
<dbReference type="GO" id="GO:0051274">
    <property type="term" value="P:beta-glucan biosynthetic process"/>
    <property type="evidence" value="ECO:0007669"/>
    <property type="project" value="TreeGrafter"/>
</dbReference>
<dbReference type="FunFam" id="2.70.98.10:FF:000001">
    <property type="entry name" value="Glucans biosynthesis protein G"/>
    <property type="match status" value="1"/>
</dbReference>
<dbReference type="Gene3D" id="2.70.98.10">
    <property type="match status" value="1"/>
</dbReference>
<dbReference type="Gene3D" id="2.60.40.10">
    <property type="entry name" value="Immunoglobulins"/>
    <property type="match status" value="1"/>
</dbReference>
<dbReference type="HAMAP" id="MF_01069">
    <property type="entry name" value="MdoG_OpgG"/>
    <property type="match status" value="1"/>
</dbReference>
<dbReference type="InterPro" id="IPR011013">
    <property type="entry name" value="Gal_mutarotase_sf_dom"/>
</dbReference>
<dbReference type="InterPro" id="IPR014718">
    <property type="entry name" value="GH-type_carb-bd"/>
</dbReference>
<dbReference type="InterPro" id="IPR014438">
    <property type="entry name" value="Glucan_biosyn_MdoG/MdoD"/>
</dbReference>
<dbReference type="InterPro" id="IPR007444">
    <property type="entry name" value="Glucan_biosyn_MdoG_C"/>
</dbReference>
<dbReference type="InterPro" id="IPR013783">
    <property type="entry name" value="Ig-like_fold"/>
</dbReference>
<dbReference type="InterPro" id="IPR014756">
    <property type="entry name" value="Ig_E-set"/>
</dbReference>
<dbReference type="InterPro" id="IPR023704">
    <property type="entry name" value="MdoG_OpgG"/>
</dbReference>
<dbReference type="PANTHER" id="PTHR30504">
    <property type="entry name" value="GLUCANS BIOSYNTHESIS PROTEIN"/>
    <property type="match status" value="1"/>
</dbReference>
<dbReference type="PANTHER" id="PTHR30504:SF2">
    <property type="entry name" value="GLUCANS BIOSYNTHESIS PROTEIN G"/>
    <property type="match status" value="1"/>
</dbReference>
<dbReference type="Pfam" id="PF04349">
    <property type="entry name" value="MdoG"/>
    <property type="match status" value="1"/>
</dbReference>
<dbReference type="PIRSF" id="PIRSF006281">
    <property type="entry name" value="MdoG"/>
    <property type="match status" value="1"/>
</dbReference>
<dbReference type="SUPFAM" id="SSF81296">
    <property type="entry name" value="E set domains"/>
    <property type="match status" value="1"/>
</dbReference>
<dbReference type="SUPFAM" id="SSF74650">
    <property type="entry name" value="Galactose mutarotase-like"/>
    <property type="match status" value="1"/>
</dbReference>
<name>OPGG_RHOPA</name>
<protein>
    <recommendedName>
        <fullName evidence="1">Glucans biosynthesis protein G</fullName>
    </recommendedName>
</protein>
<gene>
    <name evidence="1" type="primary">opgG</name>
    <name type="ordered locus">RPA2876</name>
</gene>
<feature type="signal peptide" evidence="1">
    <location>
        <begin position="1"/>
        <end position="25"/>
    </location>
</feature>
<feature type="chain" id="PRO_0000020230" description="Glucans biosynthesis protein G">
    <location>
        <begin position="26"/>
        <end position="501"/>
    </location>
</feature>
<sequence>MNRRQVLTGLAALPLLQAKPDPAAADRSSSIDFDPWMVRKLARELASKPYEAPDSSLPASLNDLSYDAYRSLRFRPERALWRAENLPFQVQFFHRGFLYKNRVTIFEVADGKARHVPYRADDFSFGDVAPPPDSDLGFAGFRIHAPLQRADYYDEVSAFLGAAYFRAVTKGERYGLSARGLSIDTGQSSGEEFPLFKTFWLERPAPGASSMVVHALLDSKSVAGAYRFTIRPGDTTVFDVEMALYPRVDLQHAGLAPMTSMFLFGPNDPADTPDFRAAVHDSDGLAIFNGSGEELWRPLCNPKDLQISSFGDRNPRGFGLMQRERSFANYQDLESRYELRPSLWAEPIGDWTDGAVKLIEIPTREEVHDNIASFWEPKQPLRAKGEHIYTYRLHWGPDTPKPKGLARFVRTGVSARGDNDRLFVLDLAGDRLKTVDAAAVRGVVTADKGEIRNIVTQPNPAMGGWRLSFDLAQARAPVELRAVVCEGDAAVSEVWLYRWTP</sequence>